<organism>
    <name type="scientific">Dictyostelium discoideum</name>
    <name type="common">Social amoeba</name>
    <dbReference type="NCBI Taxonomy" id="44689"/>
    <lineage>
        <taxon>Eukaryota</taxon>
        <taxon>Amoebozoa</taxon>
        <taxon>Evosea</taxon>
        <taxon>Eumycetozoa</taxon>
        <taxon>Dictyostelia</taxon>
        <taxon>Dictyosteliales</taxon>
        <taxon>Dictyosteliaceae</taxon>
        <taxon>Dictyostelium</taxon>
    </lineage>
</organism>
<sequence>MDTSAVSYLSSIVLNNNYKEWNNEKIIKWLSDTKKIQKVIVFKIYEITGRDLEFLSDKILFKMGVGIRDLLSFKSEFEILKNNYDNNNNNNNNNNNNNNNNNNNNNNNNNNNNNNNNNNNNNNNNNNNNKNNNNSNSNSTNINNNCSNNNSNNNHINFNSNSNITNIKNNDSKIKNKKEENKVPIIDLNQYEYVESISLGVFSVVGKYKRKGQENEFIAIKKIDILSLNEEKIIKEINKLYSINHPNIIKIIGYCKDQKNYYIASKYYPKGSIKKNTKQSPYSEMNAKRISVKILSGIDYLHSLNPPIIHRDIKCDNILLDENDDPILIDFGLSYKTIDDSTNLKTLCKKPFWASPDVNNQEIQIFSEKTDIYSFGCTIFEMIVGWESYSKKENNQPNLQKLPDNLTISCRLALGDIIGLEQNFKPDSKDLQKLSWFNESLPPIFQSQELTKSTTNTTTTTTTTTTPPPPPSPSSSSPSMNENKKIVTSDCLINSFKESGCLIFLNGELMYDNPFDKDCYQYNIVIPFGTPHLREVIHKDKNKSKHLDKIELFIDDHLAKGLVIKLGNFKLDLSKEFKKTPTFIDSIIEYLLDLLQKDNDDDDDDDVPESIILNIAVGFYKYISNFITYQYVLNQPSHFC</sequence>
<feature type="chain" id="PRO_0000362030" description="Probable serine/threonine-protein kinase samkA">
    <location>
        <begin position="1"/>
        <end position="640"/>
    </location>
</feature>
<feature type="domain" description="SAM">
    <location>
        <begin position="21"/>
        <end position="84"/>
    </location>
</feature>
<feature type="domain" description="Protein kinase" evidence="2">
    <location>
        <begin position="191"/>
        <end position="437"/>
    </location>
</feature>
<feature type="region of interest" description="Disordered" evidence="4">
    <location>
        <begin position="84"/>
        <end position="165"/>
    </location>
</feature>
<feature type="region of interest" description="Disordered" evidence="4">
    <location>
        <begin position="448"/>
        <end position="482"/>
    </location>
</feature>
<feature type="coiled-coil region" evidence="1">
    <location>
        <begin position="73"/>
        <end position="100"/>
    </location>
</feature>
<feature type="compositionally biased region" description="Low complexity" evidence="4">
    <location>
        <begin position="453"/>
        <end position="465"/>
    </location>
</feature>
<feature type="active site" description="Proton acceptor" evidence="2 3">
    <location>
        <position position="312"/>
    </location>
</feature>
<feature type="binding site" evidence="2">
    <location>
        <begin position="197"/>
        <end position="205"/>
    </location>
    <ligand>
        <name>ATP</name>
        <dbReference type="ChEBI" id="CHEBI:30616"/>
    </ligand>
</feature>
<feature type="binding site" evidence="2">
    <location>
        <position position="221"/>
    </location>
    <ligand>
        <name>ATP</name>
        <dbReference type="ChEBI" id="CHEBI:30616"/>
    </ligand>
</feature>
<proteinExistence type="inferred from homology"/>
<dbReference type="EC" id="2.7.11.1"/>
<dbReference type="EMBL" id="AAFI02000005">
    <property type="protein sequence ID" value="EAL72288.1"/>
    <property type="molecule type" value="Genomic_DNA"/>
</dbReference>
<dbReference type="RefSeq" id="XP_646368.1">
    <property type="nucleotide sequence ID" value="XM_641276.1"/>
</dbReference>
<dbReference type="SMR" id="Q55CW3"/>
<dbReference type="FunCoup" id="Q55CW3">
    <property type="interactions" value="1"/>
</dbReference>
<dbReference type="PaxDb" id="44689-DDB0231307"/>
<dbReference type="EnsemblProtists" id="EAL72288">
    <property type="protein sequence ID" value="EAL72288"/>
    <property type="gene ID" value="DDB_G0269876"/>
</dbReference>
<dbReference type="GeneID" id="8617323"/>
<dbReference type="KEGG" id="ddi:DDB_G0269876"/>
<dbReference type="dictyBase" id="DDB_G0269876">
    <property type="gene designation" value="samkA"/>
</dbReference>
<dbReference type="VEuPathDB" id="AmoebaDB:DDB_G0269876"/>
<dbReference type="eggNOG" id="KOG0198">
    <property type="taxonomic scope" value="Eukaryota"/>
</dbReference>
<dbReference type="HOGENOM" id="CLU_492983_0_0_1"/>
<dbReference type="InParanoid" id="Q55CW3"/>
<dbReference type="OMA" id="ESCTEHV"/>
<dbReference type="PhylomeDB" id="Q55CW3"/>
<dbReference type="PRO" id="PR:Q55CW3"/>
<dbReference type="Proteomes" id="UP000002195">
    <property type="component" value="Chromosome 1"/>
</dbReference>
<dbReference type="GO" id="GO:0005524">
    <property type="term" value="F:ATP binding"/>
    <property type="evidence" value="ECO:0007669"/>
    <property type="project" value="UniProtKB-KW"/>
</dbReference>
<dbReference type="GO" id="GO:0106310">
    <property type="term" value="F:protein serine kinase activity"/>
    <property type="evidence" value="ECO:0007669"/>
    <property type="project" value="RHEA"/>
</dbReference>
<dbReference type="GO" id="GO:0004674">
    <property type="term" value="F:protein serine/threonine kinase activity"/>
    <property type="evidence" value="ECO:0007669"/>
    <property type="project" value="UniProtKB-KW"/>
</dbReference>
<dbReference type="CDD" id="cd00180">
    <property type="entry name" value="PKc"/>
    <property type="match status" value="1"/>
</dbReference>
<dbReference type="Gene3D" id="1.10.510.10">
    <property type="entry name" value="Transferase(Phosphotransferase) domain 1"/>
    <property type="match status" value="1"/>
</dbReference>
<dbReference type="InterPro" id="IPR011009">
    <property type="entry name" value="Kinase-like_dom_sf"/>
</dbReference>
<dbReference type="InterPro" id="IPR051931">
    <property type="entry name" value="PAK3-like"/>
</dbReference>
<dbReference type="InterPro" id="IPR000719">
    <property type="entry name" value="Prot_kinase_dom"/>
</dbReference>
<dbReference type="InterPro" id="IPR013761">
    <property type="entry name" value="SAM/pointed_sf"/>
</dbReference>
<dbReference type="InterPro" id="IPR008271">
    <property type="entry name" value="Ser/Thr_kinase_AS"/>
</dbReference>
<dbReference type="PANTHER" id="PTHR45832">
    <property type="entry name" value="SERINE/THREONINE-PROTEIN KINASE SAMKA-RELATED-RELATED"/>
    <property type="match status" value="1"/>
</dbReference>
<dbReference type="PANTHER" id="PTHR45832:SF22">
    <property type="entry name" value="SERINE_THREONINE-PROTEIN KINASE SAMKA-RELATED"/>
    <property type="match status" value="1"/>
</dbReference>
<dbReference type="Pfam" id="PF00069">
    <property type="entry name" value="Pkinase"/>
    <property type="match status" value="1"/>
</dbReference>
<dbReference type="SMART" id="SM00220">
    <property type="entry name" value="S_TKc"/>
    <property type="match status" value="1"/>
</dbReference>
<dbReference type="SUPFAM" id="SSF56112">
    <property type="entry name" value="Protein kinase-like (PK-like)"/>
    <property type="match status" value="1"/>
</dbReference>
<dbReference type="SUPFAM" id="SSF47769">
    <property type="entry name" value="SAM/Pointed domain"/>
    <property type="match status" value="1"/>
</dbReference>
<dbReference type="PROSITE" id="PS50011">
    <property type="entry name" value="PROTEIN_KINASE_DOM"/>
    <property type="match status" value="1"/>
</dbReference>
<dbReference type="PROSITE" id="PS00108">
    <property type="entry name" value="PROTEIN_KINASE_ST"/>
    <property type="match status" value="1"/>
</dbReference>
<keyword id="KW-0067">ATP-binding</keyword>
<keyword id="KW-0175">Coiled coil</keyword>
<keyword id="KW-0418">Kinase</keyword>
<keyword id="KW-0547">Nucleotide-binding</keyword>
<keyword id="KW-1185">Reference proteome</keyword>
<keyword id="KW-0723">Serine/threonine-protein kinase</keyword>
<keyword id="KW-0808">Transferase</keyword>
<reference key="1">
    <citation type="journal article" date="2005" name="Nature">
        <title>The genome of the social amoeba Dictyostelium discoideum.</title>
        <authorList>
            <person name="Eichinger L."/>
            <person name="Pachebat J.A."/>
            <person name="Gloeckner G."/>
            <person name="Rajandream M.A."/>
            <person name="Sucgang R."/>
            <person name="Berriman M."/>
            <person name="Song J."/>
            <person name="Olsen R."/>
            <person name="Szafranski K."/>
            <person name="Xu Q."/>
            <person name="Tunggal B."/>
            <person name="Kummerfeld S."/>
            <person name="Madera M."/>
            <person name="Konfortov B.A."/>
            <person name="Rivero F."/>
            <person name="Bankier A.T."/>
            <person name="Lehmann R."/>
            <person name="Hamlin N."/>
            <person name="Davies R."/>
            <person name="Gaudet P."/>
            <person name="Fey P."/>
            <person name="Pilcher K."/>
            <person name="Chen G."/>
            <person name="Saunders D."/>
            <person name="Sodergren E.J."/>
            <person name="Davis P."/>
            <person name="Kerhornou A."/>
            <person name="Nie X."/>
            <person name="Hall N."/>
            <person name="Anjard C."/>
            <person name="Hemphill L."/>
            <person name="Bason N."/>
            <person name="Farbrother P."/>
            <person name="Desany B."/>
            <person name="Just E."/>
            <person name="Morio T."/>
            <person name="Rost R."/>
            <person name="Churcher C.M."/>
            <person name="Cooper J."/>
            <person name="Haydock S."/>
            <person name="van Driessche N."/>
            <person name="Cronin A."/>
            <person name="Goodhead I."/>
            <person name="Muzny D.M."/>
            <person name="Mourier T."/>
            <person name="Pain A."/>
            <person name="Lu M."/>
            <person name="Harper D."/>
            <person name="Lindsay R."/>
            <person name="Hauser H."/>
            <person name="James K.D."/>
            <person name="Quiles M."/>
            <person name="Madan Babu M."/>
            <person name="Saito T."/>
            <person name="Buchrieser C."/>
            <person name="Wardroper A."/>
            <person name="Felder M."/>
            <person name="Thangavelu M."/>
            <person name="Johnson D."/>
            <person name="Knights A."/>
            <person name="Loulseged H."/>
            <person name="Mungall K.L."/>
            <person name="Oliver K."/>
            <person name="Price C."/>
            <person name="Quail M.A."/>
            <person name="Urushihara H."/>
            <person name="Hernandez J."/>
            <person name="Rabbinowitsch E."/>
            <person name="Steffen D."/>
            <person name="Sanders M."/>
            <person name="Ma J."/>
            <person name="Kohara Y."/>
            <person name="Sharp S."/>
            <person name="Simmonds M.N."/>
            <person name="Spiegler S."/>
            <person name="Tivey A."/>
            <person name="Sugano S."/>
            <person name="White B."/>
            <person name="Walker D."/>
            <person name="Woodward J.R."/>
            <person name="Winckler T."/>
            <person name="Tanaka Y."/>
            <person name="Shaulsky G."/>
            <person name="Schleicher M."/>
            <person name="Weinstock G.M."/>
            <person name="Rosenthal A."/>
            <person name="Cox E.C."/>
            <person name="Chisholm R.L."/>
            <person name="Gibbs R.A."/>
            <person name="Loomis W.F."/>
            <person name="Platzer M."/>
            <person name="Kay R.R."/>
            <person name="Williams J.G."/>
            <person name="Dear P.H."/>
            <person name="Noegel A.A."/>
            <person name="Barrell B.G."/>
            <person name="Kuspa A."/>
        </authorList>
    </citation>
    <scope>NUCLEOTIDE SEQUENCE [LARGE SCALE GENOMIC DNA]</scope>
    <source>
        <strain>AX4</strain>
    </source>
</reference>
<gene>
    <name type="primary">samkA</name>
    <name type="synonym">SAMK-A</name>
    <name type="synonym">smkA</name>
    <name type="ORF">DDB_G0269876</name>
</gene>
<evidence type="ECO:0000255" key="1"/>
<evidence type="ECO:0000255" key="2">
    <source>
        <dbReference type="PROSITE-ProRule" id="PRU00159"/>
    </source>
</evidence>
<evidence type="ECO:0000255" key="3">
    <source>
        <dbReference type="PROSITE-ProRule" id="PRU10027"/>
    </source>
</evidence>
<evidence type="ECO:0000256" key="4">
    <source>
        <dbReference type="SAM" id="MobiDB-lite"/>
    </source>
</evidence>
<protein>
    <recommendedName>
        <fullName>Probable serine/threonine-protein kinase samkA</fullName>
        <ecNumber>2.7.11.1</ecNumber>
    </recommendedName>
    <alternativeName>
        <fullName>SAM domain-containing protein kinase A</fullName>
    </alternativeName>
</protein>
<comment type="catalytic activity">
    <reaction>
        <text>L-seryl-[protein] + ATP = O-phospho-L-seryl-[protein] + ADP + H(+)</text>
        <dbReference type="Rhea" id="RHEA:17989"/>
        <dbReference type="Rhea" id="RHEA-COMP:9863"/>
        <dbReference type="Rhea" id="RHEA-COMP:11604"/>
        <dbReference type="ChEBI" id="CHEBI:15378"/>
        <dbReference type="ChEBI" id="CHEBI:29999"/>
        <dbReference type="ChEBI" id="CHEBI:30616"/>
        <dbReference type="ChEBI" id="CHEBI:83421"/>
        <dbReference type="ChEBI" id="CHEBI:456216"/>
        <dbReference type="EC" id="2.7.11.1"/>
    </reaction>
</comment>
<comment type="catalytic activity">
    <reaction>
        <text>L-threonyl-[protein] + ATP = O-phospho-L-threonyl-[protein] + ADP + H(+)</text>
        <dbReference type="Rhea" id="RHEA:46608"/>
        <dbReference type="Rhea" id="RHEA-COMP:11060"/>
        <dbReference type="Rhea" id="RHEA-COMP:11605"/>
        <dbReference type="ChEBI" id="CHEBI:15378"/>
        <dbReference type="ChEBI" id="CHEBI:30013"/>
        <dbReference type="ChEBI" id="CHEBI:30616"/>
        <dbReference type="ChEBI" id="CHEBI:61977"/>
        <dbReference type="ChEBI" id="CHEBI:456216"/>
        <dbReference type="EC" id="2.7.11.1"/>
    </reaction>
</comment>
<comment type="similarity">
    <text evidence="2">Belongs to the protein kinase superfamily. Ser/Thr protein kinase family.</text>
</comment>
<name>SAMKA_DICDI</name>
<accession>Q55CW3</accession>